<comment type="function">
    <text evidence="1">In epithelial cells, the heterodimer gE/gI is required for the cell-to-cell spread of the virus, by sorting nascent virions to cell junctions. Once the virus reaches the cell junctions, virus particles can spread to adjacent cells extremely rapidly through interactions with cellular receptors that accumulate at these junctions. Implicated in basolateral spread in polarized cells. In neuronal cells, gE/gI is essential for the anterograde spread of the infection throughout the host nervous system. Together with US9, the heterodimer gE/gI is involved in the sorting and transport of viral structural components toward axon tips (By similarity).</text>
</comment>
<comment type="function">
    <text evidence="1">The heterodimer gE/gI serves as a receptor for the Fc part of host IgG. Dissociation of gE/gI from IgG occurs at acidic pH. May thus be involved in anti-HSV antibodies bipolar bridging, followed by intracellular endocytosis and degradation, thereby interfering with host IgG-mediated immune responses (By similarity).</text>
</comment>
<comment type="subunit">
    <text evidence="1">Interacts with gI; this interaction enhances the Fc receptor function of gE. The heterodimer gE/gI interacts with the Fc part of host IgG. Interacts (via C-terminus) with VP22 tegument protein; this interaction is necessary for the recruitment of VP22 to the Golgi and its packaging into virions. Interacts (via C-terminus) with UL11 tegument protein (By similarity).</text>
</comment>
<comment type="subcellular location">
    <subcellularLocation>
        <location evidence="1">Virion membrane</location>
        <topology evidence="1">Single-pass type I membrane protein</topology>
    </subcellularLocation>
    <subcellularLocation>
        <location evidence="1">Host cell membrane</location>
        <topology evidence="1">Single-pass type I membrane protein</topology>
    </subcellularLocation>
    <subcellularLocation>
        <location evidence="1">Host cell junction</location>
    </subcellularLocation>
    <subcellularLocation>
        <location evidence="1">Host Golgi apparatus membrane</location>
        <topology evidence="1">Single-pass membrane protein</topology>
    </subcellularLocation>
    <subcellularLocation>
        <location evidence="1">Host endosome membrane</location>
        <topology evidence="1">Single-pass membrane protein</topology>
    </subcellularLocation>
    <text evidence="1">During virion morphogenesis, this protein probably accumulates in the endosomes and trans-Golgi where secondary envelopment occurs. It is probably transported to the cell surface from where it is endocytosed and directed to the trans-Golgi network (TGN), maybe through an interaction with PACS-1 sorting protein. The heterodimer gE/gI then redistributes to cell junctions to promote cell-cell spread later in the infection (By similarity).</text>
</comment>
<comment type="PTM">
    <text evidence="4">Phosphorylated on serines within the acidic cluster. Phosphorylation determines whether endocytosed viral gE traffics to the trans-Golgi network or recycles to the cell membrane.</text>
</comment>
<comment type="PTM">
    <text evidence="1">N-glycosylated, and sulfated.</text>
</comment>
<comment type="similarity">
    <text evidence="4">Belongs to the alphaherpesvirinae glycoprotein E family.</text>
</comment>
<proteinExistence type="inferred from homology"/>
<dbReference type="EMBL" id="Z86099">
    <property type="protein sequence ID" value="CAB06715.1"/>
    <property type="molecule type" value="Genomic_DNA"/>
</dbReference>
<dbReference type="EMBL" id="X04798">
    <property type="protein sequence ID" value="CAA28486.1"/>
    <property type="molecule type" value="Genomic_DNA"/>
</dbReference>
<dbReference type="PIR" id="G43674">
    <property type="entry name" value="G43674"/>
</dbReference>
<dbReference type="SMR" id="P89475"/>
<dbReference type="GlyCosmos" id="P89475">
    <property type="glycosylation" value="2 sites, No reported glycans"/>
</dbReference>
<dbReference type="Proteomes" id="UP000001874">
    <property type="component" value="Segment"/>
</dbReference>
<dbReference type="GO" id="GO:0044175">
    <property type="term" value="C:host cell endosome membrane"/>
    <property type="evidence" value="ECO:0007669"/>
    <property type="project" value="UniProtKB-SubCell"/>
</dbReference>
<dbReference type="GO" id="GO:0044178">
    <property type="term" value="C:host cell Golgi membrane"/>
    <property type="evidence" value="ECO:0007669"/>
    <property type="project" value="UniProtKB-SubCell"/>
</dbReference>
<dbReference type="GO" id="GO:0044156">
    <property type="term" value="C:host cell junction"/>
    <property type="evidence" value="ECO:0007669"/>
    <property type="project" value="UniProtKB-SubCell"/>
</dbReference>
<dbReference type="GO" id="GO:0016020">
    <property type="term" value="C:membrane"/>
    <property type="evidence" value="ECO:0007669"/>
    <property type="project" value="UniProtKB-KW"/>
</dbReference>
<dbReference type="GO" id="GO:0019031">
    <property type="term" value="C:viral envelope"/>
    <property type="evidence" value="ECO:0007669"/>
    <property type="project" value="UniProtKB-KW"/>
</dbReference>
<dbReference type="GO" id="GO:0055036">
    <property type="term" value="C:virion membrane"/>
    <property type="evidence" value="ECO:0007669"/>
    <property type="project" value="UniProtKB-SubCell"/>
</dbReference>
<dbReference type="Gene3D" id="2.60.40.10">
    <property type="entry name" value="Immunoglobulins"/>
    <property type="match status" value="1"/>
</dbReference>
<dbReference type="InterPro" id="IPR046463">
    <property type="entry name" value="Herpes_gE_N"/>
</dbReference>
<dbReference type="InterPro" id="IPR003404">
    <property type="entry name" value="Herpes_glycopE_Fc"/>
</dbReference>
<dbReference type="InterPro" id="IPR036179">
    <property type="entry name" value="Ig-like_dom_sf"/>
</dbReference>
<dbReference type="InterPro" id="IPR013783">
    <property type="entry name" value="Ig-like_fold"/>
</dbReference>
<dbReference type="Pfam" id="PF02480">
    <property type="entry name" value="Herpes_gE"/>
    <property type="match status" value="1"/>
</dbReference>
<dbReference type="Pfam" id="PF20418">
    <property type="entry name" value="Herpes_gE_N"/>
    <property type="match status" value="1"/>
</dbReference>
<dbReference type="SUPFAM" id="SSF48726">
    <property type="entry name" value="Immunoglobulin"/>
    <property type="match status" value="1"/>
</dbReference>
<reference key="1">
    <citation type="journal article" date="1998" name="J. Virol.">
        <title>The genome sequence of herpes simplex virus type 2.</title>
        <authorList>
            <person name="Dolan A."/>
            <person name="Jamieson F.E."/>
            <person name="Cunningham C."/>
            <person name="Barnett B.C."/>
            <person name="McGeoch D.J."/>
        </authorList>
    </citation>
    <scope>NUCLEOTIDE SEQUENCE [LARGE SCALE GENOMIC DNA]</scope>
</reference>
<reference key="2">
    <citation type="journal article" date="1987" name="J. Gen. Virol.">
        <title>DNA sequence and genetic content of the HindIII l region in the short unique component of the herpes simplex virus type 2 genome: identification of the gene encoding glycoprotein G, and evolutionary comparisons.</title>
        <authorList>
            <person name="McGeoch D.J."/>
            <person name="Moss H.W.M."/>
            <person name="McNab D."/>
            <person name="Frame M.C."/>
        </authorList>
    </citation>
    <scope>NUCLEOTIDE SEQUENCE [GENOMIC DNA] OF 1-274</scope>
</reference>
<organism>
    <name type="scientific">Human herpesvirus 2 (strain HG52)</name>
    <name type="common">HHV-2</name>
    <name type="synonym">Human herpes simplex virus 2</name>
    <dbReference type="NCBI Taxonomy" id="10315"/>
    <lineage>
        <taxon>Viruses</taxon>
        <taxon>Duplodnaviria</taxon>
        <taxon>Heunggongvirae</taxon>
        <taxon>Peploviricota</taxon>
        <taxon>Herviviricetes</taxon>
        <taxon>Herpesvirales</taxon>
        <taxon>Orthoherpesviridae</taxon>
        <taxon>Alphaherpesvirinae</taxon>
        <taxon>Simplexvirus</taxon>
        <taxon>Simplexvirus humanalpha2</taxon>
        <taxon>Human herpesvirus 2</taxon>
    </lineage>
</organism>
<name>GE_HHV2H</name>
<protein>
    <recommendedName>
        <fullName>Envelope glycoprotein E</fullName>
        <shortName>gE</shortName>
    </recommendedName>
    <alternativeName>
        <fullName>gE-2</fullName>
    </alternativeName>
</protein>
<sequence>MARGAGLVFFVGVWVVSCLAAAPRTSWKRVTSGEDVVLLPAPAERTRAHKLLWAAEPLDACGPLRPSWVALWPPRRVLETVVDAACMRAPEPLAIAYSPPFPAGDEGLYSELAWRDRVAVVNESLVIYGALETDSGLYTLSVVGLSDEARQVASVVLVVEPAPVPTPTPDDYDEEDDAGVTNARRSAFPPQPPPRRPPVAPPTHPRVIPEVSHVRGVTVHMETLEAILFAPGETFGTNVSIHAIAHDDGPYAMDVVWMRFDVPSSCADMRIYEACLYHPQLPECLSPADAPCAVSSWAYRLAVRSYAGCSRTTPPPRCFAEARMEPVPGLAWLASTVNLEFQHASPQHAGLYLCVVYVDDHIHAWGHMTISTAAQYRNAVVEQHLPQRQPEPVEPTRPHVRAPHPAPSARGPLRLGAVLGAALLLAALGLSAWACMTCWRRRSWRAVKSRASATGPTYIRVADSELYADWSSDSEGERDGSLWQDPPERPDSPSTNGSGFEILSPTAPSVYPHSEGRKSRRPLTTFGSGSPGRRHSQASYPSVLW</sequence>
<gene>
    <name type="primary">gE</name>
    <name type="ORF">US8</name>
</gene>
<evidence type="ECO:0000250" key="1"/>
<evidence type="ECO:0000255" key="2"/>
<evidence type="ECO:0000256" key="3">
    <source>
        <dbReference type="SAM" id="MobiDB-lite"/>
    </source>
</evidence>
<evidence type="ECO:0000305" key="4"/>
<accession>P89475</accession>
<accession>P13289</accession>
<organismHost>
    <name type="scientific">Homo sapiens</name>
    <name type="common">Human</name>
    <dbReference type="NCBI Taxonomy" id="9606"/>
</organismHost>
<feature type="signal peptide" evidence="2">
    <location>
        <begin position="1"/>
        <end position="20"/>
    </location>
</feature>
<feature type="chain" id="PRO_0000385498" description="Envelope glycoprotein E">
    <location>
        <begin position="21"/>
        <end position="545"/>
    </location>
</feature>
<feature type="topological domain" description="Virion surface" evidence="2">
    <location>
        <begin position="21"/>
        <end position="414"/>
    </location>
</feature>
<feature type="transmembrane region" description="Helical" evidence="2">
    <location>
        <begin position="415"/>
        <end position="435"/>
    </location>
</feature>
<feature type="topological domain" description="Intravirion" evidence="2">
    <location>
        <begin position="436"/>
        <end position="545"/>
    </location>
</feature>
<feature type="region of interest" description="Interaction with gI" evidence="1">
    <location>
        <begin position="61"/>
        <end position="86"/>
    </location>
</feature>
<feature type="region of interest" description="Disordered" evidence="3">
    <location>
        <begin position="162"/>
        <end position="206"/>
    </location>
</feature>
<feature type="region of interest" description="Fc-binding" evidence="1">
    <location>
        <begin position="230"/>
        <end position="375"/>
    </location>
</feature>
<feature type="region of interest" description="Disordered" evidence="3">
    <location>
        <begin position="386"/>
        <end position="408"/>
    </location>
</feature>
<feature type="region of interest" description="Interaction with VP22 and UL11" evidence="1">
    <location>
        <begin position="465"/>
        <end position="490"/>
    </location>
</feature>
<feature type="region of interest" description="Disordered" evidence="3">
    <location>
        <begin position="470"/>
        <end position="545"/>
    </location>
</feature>
<feature type="region of interest" description="Acidic" evidence="1">
    <location>
        <begin position="471"/>
        <end position="479"/>
    </location>
</feature>
<feature type="short sequence motif" description="Internalization motif" evidence="2">
    <location>
        <begin position="458"/>
        <end position="461"/>
    </location>
</feature>
<feature type="short sequence motif" description="Internalization motif" evidence="2">
    <location>
        <begin position="467"/>
        <end position="470"/>
    </location>
</feature>
<feature type="compositionally biased region" description="Low complexity" evidence="3">
    <location>
        <begin position="179"/>
        <end position="188"/>
    </location>
</feature>
<feature type="compositionally biased region" description="Pro residues" evidence="3">
    <location>
        <begin position="189"/>
        <end position="204"/>
    </location>
</feature>
<feature type="compositionally biased region" description="Basic and acidic residues" evidence="3">
    <location>
        <begin position="475"/>
        <end position="491"/>
    </location>
</feature>
<feature type="modified residue" description="Sulfotyrosine; by host" evidence="1">
    <location>
        <position position="172"/>
    </location>
</feature>
<feature type="modified residue" description="Phosphoserine; by host CK2" evidence="1">
    <location>
        <position position="471"/>
    </location>
</feature>
<feature type="modified residue" description="Phosphoserine; by host CK2" evidence="1">
    <location>
        <position position="472"/>
    </location>
</feature>
<feature type="modified residue" description="Phosphoserine" evidence="1">
    <location>
        <position position="498"/>
    </location>
</feature>
<feature type="glycosylation site" description="N-linked (GlcNAc...) asparagine; by host" evidence="2">
    <location>
        <position position="122"/>
    </location>
</feature>
<feature type="glycosylation site" description="N-linked (GlcNAc...) asparagine; by host" evidence="2">
    <location>
        <position position="238"/>
    </location>
</feature>
<feature type="disulfide bond" evidence="1">
    <location>
        <begin position="266"/>
        <end position="292"/>
    </location>
</feature>
<feature type="disulfide bond" evidence="1">
    <location>
        <begin position="275"/>
        <end position="284"/>
    </location>
</feature>
<feature type="disulfide bond" evidence="1">
    <location>
        <begin position="309"/>
        <end position="318"/>
    </location>
</feature>
<keyword id="KW-1015">Disulfide bond</keyword>
<keyword id="KW-0325">Glycoprotein</keyword>
<keyword id="KW-1031">Host cell junction</keyword>
<keyword id="KW-1032">Host cell membrane</keyword>
<keyword id="KW-1039">Host endosome</keyword>
<keyword id="KW-1040">Host Golgi apparatus</keyword>
<keyword id="KW-1043">Host membrane</keyword>
<keyword id="KW-0945">Host-virus interaction</keyword>
<keyword id="KW-0472">Membrane</keyword>
<keyword id="KW-0597">Phosphoprotein</keyword>
<keyword id="KW-1185">Reference proteome</keyword>
<keyword id="KW-0732">Signal</keyword>
<keyword id="KW-0765">Sulfation</keyword>
<keyword id="KW-0812">Transmembrane</keyword>
<keyword id="KW-1133">Transmembrane helix</keyword>
<keyword id="KW-0261">Viral envelope protein</keyword>
<keyword id="KW-0899">Viral immunoevasion</keyword>
<keyword id="KW-0946">Virion</keyword>